<sequence>MSKEKEEIKIIAQNRKAFHDYFIEETYEAGIELVGTEVKSVRQGKVNLKDSFARVENNEVILYNMHISPYEKGNIFNKDPLRPRKLLLHRHEINKLSGYVSRKGYTLIPTKVYLKRGLVKVELAVAKGKKLFDKREDIARRDAKRELEKQFKEKQLGI</sequence>
<name>SSRP_CALS4</name>
<keyword id="KW-0963">Cytoplasm</keyword>
<keyword id="KW-1185">Reference proteome</keyword>
<keyword id="KW-0694">RNA-binding</keyword>
<organism>
    <name type="scientific">Caldanaerobacter subterraneus subsp. tengcongensis (strain DSM 15242 / JCM 11007 / NBRC 100824 / MB4)</name>
    <name type="common">Thermoanaerobacter tengcongensis</name>
    <dbReference type="NCBI Taxonomy" id="273068"/>
    <lineage>
        <taxon>Bacteria</taxon>
        <taxon>Bacillati</taxon>
        <taxon>Bacillota</taxon>
        <taxon>Clostridia</taxon>
        <taxon>Thermoanaerobacterales</taxon>
        <taxon>Thermoanaerobacteraceae</taxon>
        <taxon>Caldanaerobacter</taxon>
    </lineage>
</organism>
<reference key="1">
    <citation type="journal article" date="2002" name="Genome Res.">
        <title>A complete sequence of the T. tengcongensis genome.</title>
        <authorList>
            <person name="Bao Q."/>
            <person name="Tian Y."/>
            <person name="Li W."/>
            <person name="Xu Z."/>
            <person name="Xuan Z."/>
            <person name="Hu S."/>
            <person name="Dong W."/>
            <person name="Yang J."/>
            <person name="Chen Y."/>
            <person name="Xue Y."/>
            <person name="Xu Y."/>
            <person name="Lai X."/>
            <person name="Huang L."/>
            <person name="Dong X."/>
            <person name="Ma Y."/>
            <person name="Ling L."/>
            <person name="Tan H."/>
            <person name="Chen R."/>
            <person name="Wang J."/>
            <person name="Yu J."/>
            <person name="Yang H."/>
        </authorList>
    </citation>
    <scope>NUCLEOTIDE SEQUENCE [LARGE SCALE GENOMIC DNA]</scope>
    <source>
        <strain>DSM 15242 / JCM 11007 / NBRC 100824 / MB4</strain>
    </source>
</reference>
<proteinExistence type="inferred from homology"/>
<evidence type="ECO:0000255" key="1">
    <source>
        <dbReference type="HAMAP-Rule" id="MF_00023"/>
    </source>
</evidence>
<gene>
    <name evidence="1" type="primary">smpB</name>
    <name type="ordered locus">TTE0985</name>
</gene>
<accession>Q8RB39</accession>
<dbReference type="EMBL" id="AE008691">
    <property type="protein sequence ID" value="AAM24240.1"/>
    <property type="molecule type" value="Genomic_DNA"/>
</dbReference>
<dbReference type="RefSeq" id="WP_011025359.1">
    <property type="nucleotide sequence ID" value="NC_003869.1"/>
</dbReference>
<dbReference type="SMR" id="Q8RB39"/>
<dbReference type="STRING" id="273068.TTE0985"/>
<dbReference type="KEGG" id="tte:TTE0985"/>
<dbReference type="eggNOG" id="COG0691">
    <property type="taxonomic scope" value="Bacteria"/>
</dbReference>
<dbReference type="HOGENOM" id="CLU_108953_0_0_9"/>
<dbReference type="OrthoDB" id="9805462at2"/>
<dbReference type="Proteomes" id="UP000000555">
    <property type="component" value="Chromosome"/>
</dbReference>
<dbReference type="GO" id="GO:0005829">
    <property type="term" value="C:cytosol"/>
    <property type="evidence" value="ECO:0007669"/>
    <property type="project" value="TreeGrafter"/>
</dbReference>
<dbReference type="GO" id="GO:0003723">
    <property type="term" value="F:RNA binding"/>
    <property type="evidence" value="ECO:0007669"/>
    <property type="project" value="UniProtKB-UniRule"/>
</dbReference>
<dbReference type="GO" id="GO:0070929">
    <property type="term" value="P:trans-translation"/>
    <property type="evidence" value="ECO:0007669"/>
    <property type="project" value="UniProtKB-UniRule"/>
</dbReference>
<dbReference type="CDD" id="cd09294">
    <property type="entry name" value="SmpB"/>
    <property type="match status" value="1"/>
</dbReference>
<dbReference type="Gene3D" id="2.40.280.10">
    <property type="match status" value="1"/>
</dbReference>
<dbReference type="HAMAP" id="MF_00023">
    <property type="entry name" value="SmpB"/>
    <property type="match status" value="1"/>
</dbReference>
<dbReference type="InterPro" id="IPR023620">
    <property type="entry name" value="SmpB"/>
</dbReference>
<dbReference type="InterPro" id="IPR000037">
    <property type="entry name" value="SsrA-bd_prot"/>
</dbReference>
<dbReference type="InterPro" id="IPR020081">
    <property type="entry name" value="SsrA-bd_prot_CS"/>
</dbReference>
<dbReference type="NCBIfam" id="NF003843">
    <property type="entry name" value="PRK05422.1"/>
    <property type="match status" value="1"/>
</dbReference>
<dbReference type="NCBIfam" id="TIGR00086">
    <property type="entry name" value="smpB"/>
    <property type="match status" value="1"/>
</dbReference>
<dbReference type="PANTHER" id="PTHR30308:SF2">
    <property type="entry name" value="SSRA-BINDING PROTEIN"/>
    <property type="match status" value="1"/>
</dbReference>
<dbReference type="PANTHER" id="PTHR30308">
    <property type="entry name" value="TMRNA-BINDING COMPONENT OF TRANS-TRANSLATION TAGGING COMPLEX"/>
    <property type="match status" value="1"/>
</dbReference>
<dbReference type="Pfam" id="PF01668">
    <property type="entry name" value="SmpB"/>
    <property type="match status" value="1"/>
</dbReference>
<dbReference type="SUPFAM" id="SSF74982">
    <property type="entry name" value="Small protein B (SmpB)"/>
    <property type="match status" value="1"/>
</dbReference>
<dbReference type="PROSITE" id="PS01317">
    <property type="entry name" value="SSRP"/>
    <property type="match status" value="1"/>
</dbReference>
<protein>
    <recommendedName>
        <fullName evidence="1">SsrA-binding protein</fullName>
    </recommendedName>
    <alternativeName>
        <fullName evidence="1">Small protein B</fullName>
    </alternativeName>
</protein>
<comment type="function">
    <text evidence="1">Required for rescue of stalled ribosomes mediated by trans-translation. Binds to transfer-messenger RNA (tmRNA), required for stable association of tmRNA with ribosomes. tmRNA and SmpB together mimic tRNA shape, replacing the anticodon stem-loop with SmpB. tmRNA is encoded by the ssrA gene; the 2 termini fold to resemble tRNA(Ala) and it encodes a 'tag peptide', a short internal open reading frame. During trans-translation Ala-aminoacylated tmRNA acts like a tRNA, entering the A-site of stalled ribosomes, displacing the stalled mRNA. The ribosome then switches to translate the ORF on the tmRNA; the nascent peptide is terminated with the 'tag peptide' encoded by the tmRNA and targeted for degradation. The ribosome is freed to recommence translation, which seems to be the essential function of trans-translation.</text>
</comment>
<comment type="subcellular location">
    <subcellularLocation>
        <location evidence="1">Cytoplasm</location>
    </subcellularLocation>
    <text evidence="1">The tmRNA-SmpB complex associates with stalled 70S ribosomes.</text>
</comment>
<comment type="similarity">
    <text evidence="1">Belongs to the SmpB family.</text>
</comment>
<feature type="chain" id="PRO_0000103057" description="SsrA-binding protein">
    <location>
        <begin position="1"/>
        <end position="158"/>
    </location>
</feature>